<name>YH028_YEAST</name>
<sequence length="106" mass="11958">MSLSNKCFFFVSKSSSGMRSTSSSPPSMSNLAYWYVAKILSERILRISALLMYTLMEAFLIRNSPSISFNTASGGIEGEKFGREHIIVINIYIYIYIYTSTLQLCV</sequence>
<comment type="miscellaneous">
    <text evidence="1">Partially overlaps DAP2.</text>
</comment>
<comment type="caution">
    <text evidence="2">Product of a dubious gene prediction unlikely to encode a functional protein. Because of that it is not part of the S.cerevisiae S288c complete/reference proteome set.</text>
</comment>
<accession>A0A023PXE8</accession>
<dbReference type="EMBL" id="KJ412256">
    <property type="protein sequence ID" value="AHX39299.1"/>
    <property type="molecule type" value="Genomic_DNA"/>
</dbReference>
<dbReference type="PaxDb" id="4932-YHR028W-A"/>
<dbReference type="EnsemblFungi" id="YHR028W-A_mRNA">
    <property type="protein sequence ID" value="YHR028W-A"/>
    <property type="gene ID" value="YHR028W-A"/>
</dbReference>
<dbReference type="AGR" id="SGD:S000028776"/>
<dbReference type="SGD" id="S000028776">
    <property type="gene designation" value="YHR028W-A"/>
</dbReference>
<dbReference type="HOGENOM" id="CLU_2225294_0_0_1"/>
<dbReference type="ChiTaRS" id="YHR028W-A">
    <property type="organism name" value="yeast"/>
</dbReference>
<evidence type="ECO:0000305" key="1"/>
<evidence type="ECO:0000305" key="2">
    <source>
    </source>
</evidence>
<evidence type="ECO:0000312" key="3">
    <source>
        <dbReference type="SGD" id="S000028776"/>
    </source>
</evidence>
<gene>
    <name evidence="3" type="ordered locus">YHR028W-A</name>
</gene>
<reference key="1">
    <citation type="journal article" date="1994" name="Science">
        <title>Complete nucleotide sequence of Saccharomyces cerevisiae chromosome VIII.</title>
        <authorList>
            <person name="Johnston M."/>
            <person name="Andrews S."/>
            <person name="Brinkman R."/>
            <person name="Cooper J."/>
            <person name="Ding H."/>
            <person name="Dover J."/>
            <person name="Du Z."/>
            <person name="Favello A."/>
            <person name="Fulton L."/>
            <person name="Gattung S."/>
            <person name="Geisel C."/>
            <person name="Kirsten J."/>
            <person name="Kucaba T."/>
            <person name="Hillier L.W."/>
            <person name="Jier M."/>
            <person name="Johnston L."/>
            <person name="Langston Y."/>
            <person name="Latreille P."/>
            <person name="Louis E.J."/>
            <person name="Macri C."/>
            <person name="Mardis E."/>
            <person name="Menezes S."/>
            <person name="Mouser L."/>
            <person name="Nhan M."/>
            <person name="Rifkin L."/>
            <person name="Riles L."/>
            <person name="St Peter H."/>
            <person name="Trevaskis E."/>
            <person name="Vaughan K."/>
            <person name="Vignati D."/>
            <person name="Wilcox L."/>
            <person name="Wohldman P."/>
            <person name="Waterston R."/>
            <person name="Wilson R."/>
            <person name="Vaudin M."/>
        </authorList>
    </citation>
    <scope>NUCLEOTIDE SEQUENCE [LARGE SCALE GENOMIC DNA]</scope>
    <source>
        <strain>ATCC 204508 / S288c</strain>
    </source>
</reference>
<reference key="2">
    <citation type="journal article" date="2014" name="G3 (Bethesda)">
        <title>The reference genome sequence of Saccharomyces cerevisiae: Then and now.</title>
        <authorList>
            <person name="Engel S.R."/>
            <person name="Dietrich F.S."/>
            <person name="Fisk D.G."/>
            <person name="Binkley G."/>
            <person name="Balakrishnan R."/>
            <person name="Costanzo M.C."/>
            <person name="Dwight S.S."/>
            <person name="Hitz B.C."/>
            <person name="Karra K."/>
            <person name="Nash R.S."/>
            <person name="Weng S."/>
            <person name="Wong E.D."/>
            <person name="Lloyd P."/>
            <person name="Skrzypek M.S."/>
            <person name="Miyasato S.R."/>
            <person name="Simison M."/>
            <person name="Cherry J.M."/>
        </authorList>
    </citation>
    <scope>GENOME REANNOTATION</scope>
    <source>
        <strain>ATCC 204508 / S288c</strain>
    </source>
</reference>
<organism>
    <name type="scientific">Saccharomyces cerevisiae (strain ATCC 204508 / S288c)</name>
    <name type="common">Baker's yeast</name>
    <dbReference type="NCBI Taxonomy" id="559292"/>
    <lineage>
        <taxon>Eukaryota</taxon>
        <taxon>Fungi</taxon>
        <taxon>Dikarya</taxon>
        <taxon>Ascomycota</taxon>
        <taxon>Saccharomycotina</taxon>
        <taxon>Saccharomycetes</taxon>
        <taxon>Saccharomycetales</taxon>
        <taxon>Saccharomycetaceae</taxon>
        <taxon>Saccharomyces</taxon>
    </lineage>
</organism>
<feature type="chain" id="PRO_0000431017" description="Putative uncharacterized protein YHR028W-A">
    <location>
        <begin position="1"/>
        <end position="106"/>
    </location>
</feature>
<protein>
    <recommendedName>
        <fullName evidence="1">Putative uncharacterized protein YHR028W-A</fullName>
    </recommendedName>
</protein>
<proteinExistence type="uncertain"/>